<geneLocation type="chloroplast"/>
<proteinExistence type="inferred from homology"/>
<gene>
    <name evidence="1" type="primary">ndhC</name>
</gene>
<protein>
    <recommendedName>
        <fullName evidence="1">NAD(P)H-quinone oxidoreductase subunit 3, chloroplastic</fullName>
        <ecNumber evidence="1">7.1.1.-</ecNumber>
    </recommendedName>
    <alternativeName>
        <fullName evidence="1">NAD(P)H dehydrogenase subunit 3</fullName>
    </alternativeName>
    <alternativeName>
        <fullName evidence="1">NADH-plastoquinone oxidoreductase subunit 3</fullName>
    </alternativeName>
</protein>
<comment type="function">
    <text evidence="1">NDH shuttles electrons from NAD(P)H:plastoquinone, via FMN and iron-sulfur (Fe-S) centers, to quinones in the photosynthetic chain and possibly in a chloroplast respiratory chain. The immediate electron acceptor for the enzyme in this species is believed to be plastoquinone. Couples the redox reaction to proton translocation, and thus conserves the redox energy in a proton gradient.</text>
</comment>
<comment type="catalytic activity">
    <reaction evidence="1">
        <text>a plastoquinone + NADH + (n+1) H(+)(in) = a plastoquinol + NAD(+) + n H(+)(out)</text>
        <dbReference type="Rhea" id="RHEA:42608"/>
        <dbReference type="Rhea" id="RHEA-COMP:9561"/>
        <dbReference type="Rhea" id="RHEA-COMP:9562"/>
        <dbReference type="ChEBI" id="CHEBI:15378"/>
        <dbReference type="ChEBI" id="CHEBI:17757"/>
        <dbReference type="ChEBI" id="CHEBI:57540"/>
        <dbReference type="ChEBI" id="CHEBI:57945"/>
        <dbReference type="ChEBI" id="CHEBI:62192"/>
    </reaction>
</comment>
<comment type="catalytic activity">
    <reaction evidence="1">
        <text>a plastoquinone + NADPH + (n+1) H(+)(in) = a plastoquinol + NADP(+) + n H(+)(out)</text>
        <dbReference type="Rhea" id="RHEA:42612"/>
        <dbReference type="Rhea" id="RHEA-COMP:9561"/>
        <dbReference type="Rhea" id="RHEA-COMP:9562"/>
        <dbReference type="ChEBI" id="CHEBI:15378"/>
        <dbReference type="ChEBI" id="CHEBI:17757"/>
        <dbReference type="ChEBI" id="CHEBI:57783"/>
        <dbReference type="ChEBI" id="CHEBI:58349"/>
        <dbReference type="ChEBI" id="CHEBI:62192"/>
    </reaction>
</comment>
<comment type="subunit">
    <text evidence="1">NDH is composed of at least 16 different subunits, 5 of which are encoded in the nucleus.</text>
</comment>
<comment type="subcellular location">
    <subcellularLocation>
        <location evidence="1">Plastid</location>
        <location evidence="1">Chloroplast thylakoid membrane</location>
        <topology evidence="1">Multi-pass membrane protein</topology>
    </subcellularLocation>
</comment>
<comment type="similarity">
    <text evidence="1">Belongs to the complex I subunit 3 family.</text>
</comment>
<dbReference type="EC" id="7.1.1.-" evidence="1"/>
<dbReference type="EMBL" id="DQ347958">
    <property type="protein sequence ID" value="ABC56218.1"/>
    <property type="molecule type" value="Genomic_DNA"/>
</dbReference>
<dbReference type="RefSeq" id="YP_538853.1">
    <property type="nucleotide sequence ID" value="NC_007943.1"/>
</dbReference>
<dbReference type="SMR" id="Q2MII2"/>
<dbReference type="GeneID" id="3989510"/>
<dbReference type="GO" id="GO:0009535">
    <property type="term" value="C:chloroplast thylakoid membrane"/>
    <property type="evidence" value="ECO:0007669"/>
    <property type="project" value="UniProtKB-SubCell"/>
</dbReference>
<dbReference type="GO" id="GO:0030964">
    <property type="term" value="C:NADH dehydrogenase complex"/>
    <property type="evidence" value="ECO:0007669"/>
    <property type="project" value="TreeGrafter"/>
</dbReference>
<dbReference type="GO" id="GO:0008137">
    <property type="term" value="F:NADH dehydrogenase (ubiquinone) activity"/>
    <property type="evidence" value="ECO:0007669"/>
    <property type="project" value="InterPro"/>
</dbReference>
<dbReference type="GO" id="GO:0048038">
    <property type="term" value="F:quinone binding"/>
    <property type="evidence" value="ECO:0007669"/>
    <property type="project" value="UniProtKB-KW"/>
</dbReference>
<dbReference type="GO" id="GO:0019684">
    <property type="term" value="P:photosynthesis, light reaction"/>
    <property type="evidence" value="ECO:0007669"/>
    <property type="project" value="UniProtKB-UniRule"/>
</dbReference>
<dbReference type="FunFam" id="1.20.58.1610:FF:000001">
    <property type="entry name" value="NAD(P)H-quinone oxidoreductase subunit 3, chloroplastic"/>
    <property type="match status" value="1"/>
</dbReference>
<dbReference type="Gene3D" id="1.20.58.1610">
    <property type="entry name" value="NADH:ubiquinone/plastoquinone oxidoreductase, chain 3"/>
    <property type="match status" value="1"/>
</dbReference>
<dbReference type="HAMAP" id="MF_01394">
    <property type="entry name" value="NDH1_NuoA"/>
    <property type="match status" value="1"/>
</dbReference>
<dbReference type="InterPro" id="IPR023043">
    <property type="entry name" value="NAD(P)H_OxRDtase_bac/plastid"/>
</dbReference>
<dbReference type="InterPro" id="IPR000440">
    <property type="entry name" value="NADH_UbQ/plastoQ_OxRdtase_su3"/>
</dbReference>
<dbReference type="InterPro" id="IPR038430">
    <property type="entry name" value="NDAH_ubi_oxred_su3_sf"/>
</dbReference>
<dbReference type="PANTHER" id="PTHR11058">
    <property type="entry name" value="NADH-UBIQUINONE OXIDOREDUCTASE CHAIN 3"/>
    <property type="match status" value="1"/>
</dbReference>
<dbReference type="PANTHER" id="PTHR11058:SF9">
    <property type="entry name" value="NADH-UBIQUINONE OXIDOREDUCTASE CHAIN 3"/>
    <property type="match status" value="1"/>
</dbReference>
<dbReference type="Pfam" id="PF00507">
    <property type="entry name" value="Oxidored_q4"/>
    <property type="match status" value="1"/>
</dbReference>
<organism>
    <name type="scientific">Solanum bulbocastanum</name>
    <name type="common">Wild potato</name>
    <dbReference type="NCBI Taxonomy" id="147425"/>
    <lineage>
        <taxon>Eukaryota</taxon>
        <taxon>Viridiplantae</taxon>
        <taxon>Streptophyta</taxon>
        <taxon>Embryophyta</taxon>
        <taxon>Tracheophyta</taxon>
        <taxon>Spermatophyta</taxon>
        <taxon>Magnoliopsida</taxon>
        <taxon>eudicotyledons</taxon>
        <taxon>Gunneridae</taxon>
        <taxon>Pentapetalae</taxon>
        <taxon>asterids</taxon>
        <taxon>lamiids</taxon>
        <taxon>Solanales</taxon>
        <taxon>Solanaceae</taxon>
        <taxon>Solanoideae</taxon>
        <taxon>Solaneae</taxon>
        <taxon>Solanum</taxon>
    </lineage>
</organism>
<evidence type="ECO:0000255" key="1">
    <source>
        <dbReference type="HAMAP-Rule" id="MF_01394"/>
    </source>
</evidence>
<reference key="1">
    <citation type="journal article" date="2006" name="Theor. Appl. Genet.">
        <title>Complete chloroplast genome sequences of Solanum bulbocastanum, Solanum lycopersicum and comparative analyses with other Solanaceae genomes.</title>
        <authorList>
            <person name="Daniell H."/>
            <person name="Lee S.-B."/>
            <person name="Grevich J."/>
            <person name="Saski C."/>
            <person name="Quesada-Vargas T."/>
            <person name="Guda C."/>
            <person name="Tomkins J."/>
            <person name="Jansen R.K."/>
        </authorList>
    </citation>
    <scope>NUCLEOTIDE SEQUENCE [LARGE SCALE GENOMIC DNA]</scope>
    <source>
        <strain>cv. PT29</strain>
    </source>
</reference>
<keyword id="KW-0150">Chloroplast</keyword>
<keyword id="KW-0472">Membrane</keyword>
<keyword id="KW-0520">NAD</keyword>
<keyword id="KW-0521">NADP</keyword>
<keyword id="KW-0934">Plastid</keyword>
<keyword id="KW-0618">Plastoquinone</keyword>
<keyword id="KW-0874">Quinone</keyword>
<keyword id="KW-0793">Thylakoid</keyword>
<keyword id="KW-1278">Translocase</keyword>
<keyword id="KW-0812">Transmembrane</keyword>
<keyword id="KW-1133">Transmembrane helix</keyword>
<keyword id="KW-0813">Transport</keyword>
<accession>Q2MII2</accession>
<sequence length="120" mass="13951">MFLLYEYDFFWAFLIISILVPILAFFISGVLAPISKGPEKLSTYESGIEPMGDAWLQFRIRYYMFALVFVVFDVETVFLYPWAMSFDVLGVSVFIEAFIFVLILIIGLVYAWRKGALEWS</sequence>
<feature type="chain" id="PRO_0000362872" description="NAD(P)H-quinone oxidoreductase subunit 3, chloroplastic">
    <location>
        <begin position="1"/>
        <end position="120"/>
    </location>
</feature>
<feature type="transmembrane region" description="Helical" evidence="1">
    <location>
        <begin position="9"/>
        <end position="29"/>
    </location>
</feature>
<feature type="transmembrane region" description="Helical" evidence="1">
    <location>
        <begin position="64"/>
        <end position="84"/>
    </location>
</feature>
<feature type="transmembrane region" description="Helical" evidence="1">
    <location>
        <begin position="88"/>
        <end position="108"/>
    </location>
</feature>
<name>NU3C_SOLBU</name>